<sequence length="433" mass="47283">MRVLVLGSGVIGTASAYYLARQGFEVTVVDRQPAVAMETSFANAGQISPGYASPWAAPGVPLKAIKWLLERHAPLAIKLTGDVDQYLWMAQMLRNCTASRYAVNKERMVRLSEYSRDCLDELRAETGIAYESRTLGTTQLFRTQAQLDAAAKDIAVLEQSGVPYELLDRDGIARVEPALAGVKDILAGALRLPNDQTGDCQLFTTKLAEMALKLGVEFRFGQDIQRLDFAGDRINGVWVDGKLETADRYVLALGSYSPQMLKPLGIKAPVYPLKGYSLTVPITNADMAPTSTILDETYKVAITRFDNRIRVGGMAEIAGFDLSLNPRRRETLEMIVNDLYPRGGDLSQASFWTGLRPATPDGTPIVGATAFRNLFLNTGHGTLGWTMACGSGRLLADLIARKKPQISAEGLDISRYGKTREVAKQGHTAPVHQ</sequence>
<reference key="1">
    <citation type="submission" date="2008-02" db="EMBL/GenBank/DDBJ databases">
        <title>Complete sequence of Pseudomonas putida W619.</title>
        <authorList>
            <person name="Copeland A."/>
            <person name="Lucas S."/>
            <person name="Lapidus A."/>
            <person name="Barry K."/>
            <person name="Detter J.C."/>
            <person name="Glavina del Rio T."/>
            <person name="Dalin E."/>
            <person name="Tice H."/>
            <person name="Pitluck S."/>
            <person name="Chain P."/>
            <person name="Malfatti S."/>
            <person name="Shin M."/>
            <person name="Vergez L."/>
            <person name="Schmutz J."/>
            <person name="Larimer F."/>
            <person name="Land M."/>
            <person name="Hauser L."/>
            <person name="Kyrpides N."/>
            <person name="Kim E."/>
            <person name="Taghavi S."/>
            <person name="Vangronsveld D."/>
            <person name="van der Lelie D."/>
            <person name="Richardson P."/>
        </authorList>
    </citation>
    <scope>NUCLEOTIDE SEQUENCE [LARGE SCALE GENOMIC DNA]</scope>
    <source>
        <strain>W619</strain>
    </source>
</reference>
<protein>
    <recommendedName>
        <fullName evidence="1">D-amino acid dehydrogenase</fullName>
        <ecNumber evidence="1">1.4.99.-</ecNumber>
    </recommendedName>
</protein>
<evidence type="ECO:0000255" key="1">
    <source>
        <dbReference type="HAMAP-Rule" id="MF_01202"/>
    </source>
</evidence>
<name>DADA_PSEPW</name>
<organism>
    <name type="scientific">Pseudomonas putida (strain W619)</name>
    <dbReference type="NCBI Taxonomy" id="390235"/>
    <lineage>
        <taxon>Bacteria</taxon>
        <taxon>Pseudomonadati</taxon>
        <taxon>Pseudomonadota</taxon>
        <taxon>Gammaproteobacteria</taxon>
        <taxon>Pseudomonadales</taxon>
        <taxon>Pseudomonadaceae</taxon>
        <taxon>Pseudomonas</taxon>
    </lineage>
</organism>
<comment type="function">
    <text evidence="1">Oxidative deamination of D-amino acids.</text>
</comment>
<comment type="catalytic activity">
    <reaction evidence="1">
        <text>a D-alpha-amino acid + A + H2O = a 2-oxocarboxylate + AH2 + NH4(+)</text>
        <dbReference type="Rhea" id="RHEA:18125"/>
        <dbReference type="ChEBI" id="CHEBI:13193"/>
        <dbReference type="ChEBI" id="CHEBI:15377"/>
        <dbReference type="ChEBI" id="CHEBI:17499"/>
        <dbReference type="ChEBI" id="CHEBI:28938"/>
        <dbReference type="ChEBI" id="CHEBI:35179"/>
        <dbReference type="ChEBI" id="CHEBI:59871"/>
    </reaction>
</comment>
<comment type="cofactor">
    <cofactor evidence="1">
        <name>FAD</name>
        <dbReference type="ChEBI" id="CHEBI:57692"/>
    </cofactor>
</comment>
<comment type="pathway">
    <text>Amino-acid degradation; D-alanine degradation; NH(3) and pyruvate from D-alanine: step 1/1.</text>
</comment>
<comment type="similarity">
    <text evidence="1">Belongs to the DadA oxidoreductase family.</text>
</comment>
<accession>B1J4P3</accession>
<proteinExistence type="inferred from homology"/>
<gene>
    <name evidence="1" type="primary">dadA</name>
    <name type="ordered locus">PputW619_0200</name>
</gene>
<feature type="chain" id="PRO_1000138662" description="D-amino acid dehydrogenase">
    <location>
        <begin position="1"/>
        <end position="433"/>
    </location>
</feature>
<feature type="binding site" evidence="1">
    <location>
        <begin position="3"/>
        <end position="17"/>
    </location>
    <ligand>
        <name>FAD</name>
        <dbReference type="ChEBI" id="CHEBI:57692"/>
    </ligand>
</feature>
<dbReference type="EC" id="1.4.99.-" evidence="1"/>
<dbReference type="EMBL" id="CP000949">
    <property type="protein sequence ID" value="ACA70706.1"/>
    <property type="molecule type" value="Genomic_DNA"/>
</dbReference>
<dbReference type="SMR" id="B1J4P3"/>
<dbReference type="STRING" id="390235.PputW619_0200"/>
<dbReference type="KEGG" id="ppw:PputW619_0200"/>
<dbReference type="eggNOG" id="COG0665">
    <property type="taxonomic scope" value="Bacteria"/>
</dbReference>
<dbReference type="HOGENOM" id="CLU_007884_9_2_6"/>
<dbReference type="OrthoDB" id="9805337at2"/>
<dbReference type="UniPathway" id="UPA00043">
    <property type="reaction ID" value="UER00498"/>
</dbReference>
<dbReference type="GO" id="GO:0005737">
    <property type="term" value="C:cytoplasm"/>
    <property type="evidence" value="ECO:0007669"/>
    <property type="project" value="TreeGrafter"/>
</dbReference>
<dbReference type="GO" id="GO:0005886">
    <property type="term" value="C:plasma membrane"/>
    <property type="evidence" value="ECO:0007669"/>
    <property type="project" value="TreeGrafter"/>
</dbReference>
<dbReference type="GO" id="GO:0008718">
    <property type="term" value="F:D-amino-acid dehydrogenase activity"/>
    <property type="evidence" value="ECO:0007669"/>
    <property type="project" value="UniProtKB-UniRule"/>
</dbReference>
<dbReference type="GO" id="GO:0055130">
    <property type="term" value="P:D-alanine catabolic process"/>
    <property type="evidence" value="ECO:0007669"/>
    <property type="project" value="UniProtKB-UniPathway"/>
</dbReference>
<dbReference type="FunFam" id="3.50.50.60:FF:000020">
    <property type="entry name" value="D-amino acid dehydrogenase"/>
    <property type="match status" value="1"/>
</dbReference>
<dbReference type="Gene3D" id="3.30.9.10">
    <property type="entry name" value="D-Amino Acid Oxidase, subunit A, domain 2"/>
    <property type="match status" value="1"/>
</dbReference>
<dbReference type="Gene3D" id="3.50.50.60">
    <property type="entry name" value="FAD/NAD(P)-binding domain"/>
    <property type="match status" value="2"/>
</dbReference>
<dbReference type="HAMAP" id="MF_01202">
    <property type="entry name" value="DadA"/>
    <property type="match status" value="1"/>
</dbReference>
<dbReference type="InterPro" id="IPR023080">
    <property type="entry name" value="DadA"/>
</dbReference>
<dbReference type="InterPro" id="IPR006076">
    <property type="entry name" value="FAD-dep_OxRdtase"/>
</dbReference>
<dbReference type="InterPro" id="IPR036188">
    <property type="entry name" value="FAD/NAD-bd_sf"/>
</dbReference>
<dbReference type="NCBIfam" id="NF001933">
    <property type="entry name" value="PRK00711.1"/>
    <property type="match status" value="1"/>
</dbReference>
<dbReference type="PANTHER" id="PTHR13847:SF280">
    <property type="entry name" value="D-AMINO ACID DEHYDROGENASE"/>
    <property type="match status" value="1"/>
</dbReference>
<dbReference type="PANTHER" id="PTHR13847">
    <property type="entry name" value="SARCOSINE DEHYDROGENASE-RELATED"/>
    <property type="match status" value="1"/>
</dbReference>
<dbReference type="Pfam" id="PF01266">
    <property type="entry name" value="DAO"/>
    <property type="match status" value="1"/>
</dbReference>
<dbReference type="SUPFAM" id="SSF54373">
    <property type="entry name" value="FAD-linked reductases, C-terminal domain"/>
    <property type="match status" value="1"/>
</dbReference>
<dbReference type="SUPFAM" id="SSF51905">
    <property type="entry name" value="FAD/NAD(P)-binding domain"/>
    <property type="match status" value="1"/>
</dbReference>
<keyword id="KW-0274">FAD</keyword>
<keyword id="KW-0285">Flavoprotein</keyword>
<keyword id="KW-0560">Oxidoreductase</keyword>